<proteinExistence type="inferred from homology"/>
<reference key="1">
    <citation type="journal article" date="2004" name="Proc. Natl. Acad. Sci. U.S.A.">
        <title>Complete genomes of two clinical Staphylococcus aureus strains: evidence for the rapid evolution of virulence and drug resistance.</title>
        <authorList>
            <person name="Holden M.T.G."/>
            <person name="Feil E.J."/>
            <person name="Lindsay J.A."/>
            <person name="Peacock S.J."/>
            <person name="Day N.P.J."/>
            <person name="Enright M.C."/>
            <person name="Foster T.J."/>
            <person name="Moore C.E."/>
            <person name="Hurst L."/>
            <person name="Atkin R."/>
            <person name="Barron A."/>
            <person name="Bason N."/>
            <person name="Bentley S.D."/>
            <person name="Chillingworth C."/>
            <person name="Chillingworth T."/>
            <person name="Churcher C."/>
            <person name="Clark L."/>
            <person name="Corton C."/>
            <person name="Cronin A."/>
            <person name="Doggett J."/>
            <person name="Dowd L."/>
            <person name="Feltwell T."/>
            <person name="Hance Z."/>
            <person name="Harris B."/>
            <person name="Hauser H."/>
            <person name="Holroyd S."/>
            <person name="Jagels K."/>
            <person name="James K.D."/>
            <person name="Lennard N."/>
            <person name="Line A."/>
            <person name="Mayes R."/>
            <person name="Moule S."/>
            <person name="Mungall K."/>
            <person name="Ormond D."/>
            <person name="Quail M.A."/>
            <person name="Rabbinowitsch E."/>
            <person name="Rutherford K.M."/>
            <person name="Sanders M."/>
            <person name="Sharp S."/>
            <person name="Simmonds M."/>
            <person name="Stevens K."/>
            <person name="Whitehead S."/>
            <person name="Barrell B.G."/>
            <person name="Spratt B.G."/>
            <person name="Parkhill J."/>
        </authorList>
    </citation>
    <scope>NUCLEOTIDE SEQUENCE [LARGE SCALE GENOMIC DNA]</scope>
    <source>
        <strain>MRSA252</strain>
    </source>
</reference>
<evidence type="ECO:0000255" key="1">
    <source>
        <dbReference type="HAMAP-Rule" id="MF_00010"/>
    </source>
</evidence>
<feature type="chain" id="PRO_0000162349" description="UPF0060 membrane protein SAR2425">
    <location>
        <begin position="1"/>
        <end position="108"/>
    </location>
</feature>
<feature type="transmembrane region" description="Helical" evidence="1">
    <location>
        <begin position="5"/>
        <end position="25"/>
    </location>
</feature>
<feature type="transmembrane region" description="Helical" evidence="1">
    <location>
        <begin position="31"/>
        <end position="51"/>
    </location>
</feature>
<feature type="transmembrane region" description="Helical" evidence="1">
    <location>
        <begin position="60"/>
        <end position="80"/>
    </location>
</feature>
<feature type="transmembrane region" description="Helical" evidence="1">
    <location>
        <begin position="86"/>
        <end position="106"/>
    </location>
</feature>
<keyword id="KW-1003">Cell membrane</keyword>
<keyword id="KW-0472">Membrane</keyword>
<keyword id="KW-0812">Transmembrane</keyword>
<keyword id="KW-1133">Transmembrane helix</keyword>
<accession>Q6GE96</accession>
<gene>
    <name type="ordered locus">SAR2425</name>
</gene>
<protein>
    <recommendedName>
        <fullName evidence="1">UPF0060 membrane protein SAR2425</fullName>
    </recommendedName>
</protein>
<name>Y2425_STAAR</name>
<sequence>MLYPIFIFILAGLCEIGGGYLIWLWLREGQSSLVGLIGGVILMLYGVIATFQSFPSFGRVYAAYGGVFIIMSLIFAMVVDKQMPDKYDVIGAIICIVGVLVMLLPSRA</sequence>
<comment type="subcellular location">
    <subcellularLocation>
        <location evidence="1">Cell membrane</location>
        <topology evidence="1">Multi-pass membrane protein</topology>
    </subcellularLocation>
</comment>
<comment type="similarity">
    <text evidence="1">Belongs to the UPF0060 family.</text>
</comment>
<dbReference type="EMBL" id="BX571856">
    <property type="protein sequence ID" value="CAG41405.1"/>
    <property type="molecule type" value="Genomic_DNA"/>
</dbReference>
<dbReference type="RefSeq" id="WP_000966697.1">
    <property type="nucleotide sequence ID" value="NC_002952.2"/>
</dbReference>
<dbReference type="SMR" id="Q6GE96"/>
<dbReference type="KEGG" id="sar:SAR2425"/>
<dbReference type="HOGENOM" id="CLU_117653_0_1_9"/>
<dbReference type="Proteomes" id="UP000000596">
    <property type="component" value="Chromosome"/>
</dbReference>
<dbReference type="GO" id="GO:0005886">
    <property type="term" value="C:plasma membrane"/>
    <property type="evidence" value="ECO:0007669"/>
    <property type="project" value="UniProtKB-SubCell"/>
</dbReference>
<dbReference type="HAMAP" id="MF_00010">
    <property type="entry name" value="UPF0060"/>
    <property type="match status" value="1"/>
</dbReference>
<dbReference type="InterPro" id="IPR003844">
    <property type="entry name" value="UPF0060"/>
</dbReference>
<dbReference type="NCBIfam" id="NF002586">
    <property type="entry name" value="PRK02237.1"/>
    <property type="match status" value="1"/>
</dbReference>
<dbReference type="PANTHER" id="PTHR36116">
    <property type="entry name" value="UPF0060 MEMBRANE PROTEIN YNFA"/>
    <property type="match status" value="1"/>
</dbReference>
<dbReference type="PANTHER" id="PTHR36116:SF1">
    <property type="entry name" value="UPF0060 MEMBRANE PROTEIN YNFA"/>
    <property type="match status" value="1"/>
</dbReference>
<dbReference type="Pfam" id="PF02694">
    <property type="entry name" value="UPF0060"/>
    <property type="match status" value="1"/>
</dbReference>
<dbReference type="SUPFAM" id="SSF103481">
    <property type="entry name" value="Multidrug resistance efflux transporter EmrE"/>
    <property type="match status" value="1"/>
</dbReference>
<organism>
    <name type="scientific">Staphylococcus aureus (strain MRSA252)</name>
    <dbReference type="NCBI Taxonomy" id="282458"/>
    <lineage>
        <taxon>Bacteria</taxon>
        <taxon>Bacillati</taxon>
        <taxon>Bacillota</taxon>
        <taxon>Bacilli</taxon>
        <taxon>Bacillales</taxon>
        <taxon>Staphylococcaceae</taxon>
        <taxon>Staphylococcus</taxon>
    </lineage>
</organism>